<name>EFG_SYNS3</name>
<dbReference type="EMBL" id="CP000435">
    <property type="protein sequence ID" value="ABI47418.1"/>
    <property type="molecule type" value="Genomic_DNA"/>
</dbReference>
<dbReference type="RefSeq" id="WP_011618353.1">
    <property type="nucleotide sequence ID" value="NC_008319.1"/>
</dbReference>
<dbReference type="SMR" id="Q0ID58"/>
<dbReference type="STRING" id="64471.sync_0382"/>
<dbReference type="KEGG" id="syg:sync_0382"/>
<dbReference type="eggNOG" id="COG0480">
    <property type="taxonomic scope" value="Bacteria"/>
</dbReference>
<dbReference type="HOGENOM" id="CLU_002794_4_1_3"/>
<dbReference type="OrthoDB" id="580826at2"/>
<dbReference type="Proteomes" id="UP000001961">
    <property type="component" value="Chromosome"/>
</dbReference>
<dbReference type="GO" id="GO:0005737">
    <property type="term" value="C:cytoplasm"/>
    <property type="evidence" value="ECO:0007669"/>
    <property type="project" value="UniProtKB-SubCell"/>
</dbReference>
<dbReference type="GO" id="GO:0005525">
    <property type="term" value="F:GTP binding"/>
    <property type="evidence" value="ECO:0007669"/>
    <property type="project" value="UniProtKB-UniRule"/>
</dbReference>
<dbReference type="GO" id="GO:0003924">
    <property type="term" value="F:GTPase activity"/>
    <property type="evidence" value="ECO:0007669"/>
    <property type="project" value="InterPro"/>
</dbReference>
<dbReference type="GO" id="GO:0003746">
    <property type="term" value="F:translation elongation factor activity"/>
    <property type="evidence" value="ECO:0007669"/>
    <property type="project" value="UniProtKB-UniRule"/>
</dbReference>
<dbReference type="GO" id="GO:0032790">
    <property type="term" value="P:ribosome disassembly"/>
    <property type="evidence" value="ECO:0007669"/>
    <property type="project" value="TreeGrafter"/>
</dbReference>
<dbReference type="CDD" id="cd01886">
    <property type="entry name" value="EF-G"/>
    <property type="match status" value="1"/>
</dbReference>
<dbReference type="CDD" id="cd16262">
    <property type="entry name" value="EFG_III"/>
    <property type="match status" value="1"/>
</dbReference>
<dbReference type="CDD" id="cd01434">
    <property type="entry name" value="EFG_mtEFG1_IV"/>
    <property type="match status" value="1"/>
</dbReference>
<dbReference type="CDD" id="cd03713">
    <property type="entry name" value="EFG_mtEFG_C"/>
    <property type="match status" value="1"/>
</dbReference>
<dbReference type="CDD" id="cd04088">
    <property type="entry name" value="EFG_mtEFG_II"/>
    <property type="match status" value="1"/>
</dbReference>
<dbReference type="FunFam" id="2.40.30.10:FF:000006">
    <property type="entry name" value="Elongation factor G"/>
    <property type="match status" value="1"/>
</dbReference>
<dbReference type="FunFam" id="3.30.230.10:FF:000003">
    <property type="entry name" value="Elongation factor G"/>
    <property type="match status" value="1"/>
</dbReference>
<dbReference type="FunFam" id="3.30.70.240:FF:000001">
    <property type="entry name" value="Elongation factor G"/>
    <property type="match status" value="1"/>
</dbReference>
<dbReference type="FunFam" id="3.30.70.870:FF:000001">
    <property type="entry name" value="Elongation factor G"/>
    <property type="match status" value="1"/>
</dbReference>
<dbReference type="FunFam" id="3.40.50.300:FF:000029">
    <property type="entry name" value="Elongation factor G"/>
    <property type="match status" value="1"/>
</dbReference>
<dbReference type="Gene3D" id="3.30.230.10">
    <property type="match status" value="1"/>
</dbReference>
<dbReference type="Gene3D" id="3.30.70.240">
    <property type="match status" value="1"/>
</dbReference>
<dbReference type="Gene3D" id="3.30.70.870">
    <property type="entry name" value="Elongation Factor G (Translational Gtpase), domain 3"/>
    <property type="match status" value="1"/>
</dbReference>
<dbReference type="Gene3D" id="3.40.50.300">
    <property type="entry name" value="P-loop containing nucleotide triphosphate hydrolases"/>
    <property type="match status" value="1"/>
</dbReference>
<dbReference type="Gene3D" id="2.40.30.10">
    <property type="entry name" value="Translation factors"/>
    <property type="match status" value="1"/>
</dbReference>
<dbReference type="HAMAP" id="MF_00054_B">
    <property type="entry name" value="EF_G_EF_2_B"/>
    <property type="match status" value="1"/>
</dbReference>
<dbReference type="InterPro" id="IPR041095">
    <property type="entry name" value="EFG_II"/>
</dbReference>
<dbReference type="InterPro" id="IPR009022">
    <property type="entry name" value="EFG_III"/>
</dbReference>
<dbReference type="InterPro" id="IPR035647">
    <property type="entry name" value="EFG_III/V"/>
</dbReference>
<dbReference type="InterPro" id="IPR047872">
    <property type="entry name" value="EFG_IV"/>
</dbReference>
<dbReference type="InterPro" id="IPR035649">
    <property type="entry name" value="EFG_V"/>
</dbReference>
<dbReference type="InterPro" id="IPR000640">
    <property type="entry name" value="EFG_V-like"/>
</dbReference>
<dbReference type="InterPro" id="IPR004161">
    <property type="entry name" value="EFTu-like_2"/>
</dbReference>
<dbReference type="InterPro" id="IPR031157">
    <property type="entry name" value="G_TR_CS"/>
</dbReference>
<dbReference type="InterPro" id="IPR027417">
    <property type="entry name" value="P-loop_NTPase"/>
</dbReference>
<dbReference type="InterPro" id="IPR020568">
    <property type="entry name" value="Ribosomal_Su5_D2-typ_SF"/>
</dbReference>
<dbReference type="InterPro" id="IPR014721">
    <property type="entry name" value="Ribsml_uS5_D2-typ_fold_subgr"/>
</dbReference>
<dbReference type="InterPro" id="IPR005225">
    <property type="entry name" value="Small_GTP-bd"/>
</dbReference>
<dbReference type="InterPro" id="IPR000795">
    <property type="entry name" value="T_Tr_GTP-bd_dom"/>
</dbReference>
<dbReference type="InterPro" id="IPR009000">
    <property type="entry name" value="Transl_B-barrel_sf"/>
</dbReference>
<dbReference type="InterPro" id="IPR004540">
    <property type="entry name" value="Transl_elong_EFG/EF2"/>
</dbReference>
<dbReference type="InterPro" id="IPR005517">
    <property type="entry name" value="Transl_elong_EFG/EF2_IV"/>
</dbReference>
<dbReference type="NCBIfam" id="TIGR00484">
    <property type="entry name" value="EF-G"/>
    <property type="match status" value="1"/>
</dbReference>
<dbReference type="NCBIfam" id="NF009379">
    <property type="entry name" value="PRK12740.1-3"/>
    <property type="match status" value="1"/>
</dbReference>
<dbReference type="NCBIfam" id="NF009381">
    <property type="entry name" value="PRK12740.1-5"/>
    <property type="match status" value="1"/>
</dbReference>
<dbReference type="NCBIfam" id="TIGR00231">
    <property type="entry name" value="small_GTP"/>
    <property type="match status" value="1"/>
</dbReference>
<dbReference type="PANTHER" id="PTHR43261:SF1">
    <property type="entry name" value="RIBOSOME-RELEASING FACTOR 2, MITOCHONDRIAL"/>
    <property type="match status" value="1"/>
</dbReference>
<dbReference type="PANTHER" id="PTHR43261">
    <property type="entry name" value="TRANSLATION ELONGATION FACTOR G-RELATED"/>
    <property type="match status" value="1"/>
</dbReference>
<dbReference type="Pfam" id="PF00679">
    <property type="entry name" value="EFG_C"/>
    <property type="match status" value="1"/>
</dbReference>
<dbReference type="Pfam" id="PF14492">
    <property type="entry name" value="EFG_III"/>
    <property type="match status" value="1"/>
</dbReference>
<dbReference type="Pfam" id="PF03764">
    <property type="entry name" value="EFG_IV"/>
    <property type="match status" value="1"/>
</dbReference>
<dbReference type="Pfam" id="PF00009">
    <property type="entry name" value="GTP_EFTU"/>
    <property type="match status" value="1"/>
</dbReference>
<dbReference type="Pfam" id="PF03144">
    <property type="entry name" value="GTP_EFTU_D2"/>
    <property type="match status" value="1"/>
</dbReference>
<dbReference type="PRINTS" id="PR00315">
    <property type="entry name" value="ELONGATNFCT"/>
</dbReference>
<dbReference type="SMART" id="SM00838">
    <property type="entry name" value="EFG_C"/>
    <property type="match status" value="1"/>
</dbReference>
<dbReference type="SMART" id="SM00889">
    <property type="entry name" value="EFG_IV"/>
    <property type="match status" value="1"/>
</dbReference>
<dbReference type="SUPFAM" id="SSF54980">
    <property type="entry name" value="EF-G C-terminal domain-like"/>
    <property type="match status" value="2"/>
</dbReference>
<dbReference type="SUPFAM" id="SSF52540">
    <property type="entry name" value="P-loop containing nucleoside triphosphate hydrolases"/>
    <property type="match status" value="1"/>
</dbReference>
<dbReference type="SUPFAM" id="SSF54211">
    <property type="entry name" value="Ribosomal protein S5 domain 2-like"/>
    <property type="match status" value="1"/>
</dbReference>
<dbReference type="SUPFAM" id="SSF50447">
    <property type="entry name" value="Translation proteins"/>
    <property type="match status" value="1"/>
</dbReference>
<dbReference type="PROSITE" id="PS00301">
    <property type="entry name" value="G_TR_1"/>
    <property type="match status" value="1"/>
</dbReference>
<dbReference type="PROSITE" id="PS51722">
    <property type="entry name" value="G_TR_2"/>
    <property type="match status" value="1"/>
</dbReference>
<organism>
    <name type="scientific">Synechococcus sp. (strain CC9311)</name>
    <dbReference type="NCBI Taxonomy" id="64471"/>
    <lineage>
        <taxon>Bacteria</taxon>
        <taxon>Bacillati</taxon>
        <taxon>Cyanobacteriota</taxon>
        <taxon>Cyanophyceae</taxon>
        <taxon>Synechococcales</taxon>
        <taxon>Synechococcaceae</taxon>
        <taxon>Synechococcus</taxon>
    </lineage>
</organism>
<sequence>MARDFPLERVRNIGIAAHIDAGKTTTTERILFYSGVVHKIGEVHDGAAVTDWMAQERERGITITAAAISTSWNNHRINIIDTPGHVDFTIEVERSMRVLDGVIAVFCAVGGVQPQSETVWRQADRYSVPRMVFVNKMDRTGADFLKVFGQIKDRLKANAVPIQLPIGAEGELSGIIDLVENKAHIYKDDLGQDIEVTDVPADMKDEADKWRNVLMETIAENDEDLIEKFLESGELSNSDLKRGIRTGVLKHNLVPVLCGSAFKNKGVQLVLDAVVDYLPAPIDVPPIQGLLPNGKEAVRPSDDNAPFSALAFKVMADPYGKLTFVRMYSGVLEKGSYVLNSTKDTKERISRLVVLKADDREEVDALRAGDLGAVLGLKNTTTGDTLCATDDPIVLETLFVPEPVISVAVEPKTKGDMEKLSKALVSLAEEDPTFRVRTDQETGQTVIAGMGELHLEILVDRMLREFKVEANIGAPQVSYRETIRGSSKGEGKFSRQTGGKGQYGHVVIEMEPGEPESGFEFINKIVGGIVPKEYIKPAEQGMKETCESGVIAGYPLIDVKCTMVDGSYHDVDSSEMAFKIAGSMAFKDAVKKCNPVLLEPMMKVEVEIPEDFLGSVIGDLSSRRGQVEGQSVDDGTSKVSSKVPLAEMFGYATELRSMTQGRGIFSMEFSHYEDVPRNVAEAIISKNQGNS</sequence>
<feature type="chain" id="PRO_0000263520" description="Elongation factor G">
    <location>
        <begin position="1"/>
        <end position="691"/>
    </location>
</feature>
<feature type="domain" description="tr-type G">
    <location>
        <begin position="8"/>
        <end position="282"/>
    </location>
</feature>
<feature type="binding site" evidence="1">
    <location>
        <begin position="17"/>
        <end position="24"/>
    </location>
    <ligand>
        <name>GTP</name>
        <dbReference type="ChEBI" id="CHEBI:37565"/>
    </ligand>
</feature>
<feature type="binding site" evidence="1">
    <location>
        <begin position="81"/>
        <end position="85"/>
    </location>
    <ligand>
        <name>GTP</name>
        <dbReference type="ChEBI" id="CHEBI:37565"/>
    </ligand>
</feature>
<feature type="binding site" evidence="1">
    <location>
        <begin position="135"/>
        <end position="138"/>
    </location>
    <ligand>
        <name>GTP</name>
        <dbReference type="ChEBI" id="CHEBI:37565"/>
    </ligand>
</feature>
<proteinExistence type="inferred from homology"/>
<evidence type="ECO:0000255" key="1">
    <source>
        <dbReference type="HAMAP-Rule" id="MF_00054"/>
    </source>
</evidence>
<gene>
    <name evidence="1" type="primary">fusA</name>
    <name type="ordered locus">sync_0382</name>
</gene>
<keyword id="KW-0963">Cytoplasm</keyword>
<keyword id="KW-0251">Elongation factor</keyword>
<keyword id="KW-0342">GTP-binding</keyword>
<keyword id="KW-0547">Nucleotide-binding</keyword>
<keyword id="KW-0648">Protein biosynthesis</keyword>
<keyword id="KW-1185">Reference proteome</keyword>
<protein>
    <recommendedName>
        <fullName evidence="1">Elongation factor G</fullName>
        <shortName evidence="1">EF-G</shortName>
    </recommendedName>
</protein>
<comment type="function">
    <text evidence="1">Catalyzes the GTP-dependent ribosomal translocation step during translation elongation. During this step, the ribosome changes from the pre-translocational (PRE) to the post-translocational (POST) state as the newly formed A-site-bound peptidyl-tRNA and P-site-bound deacylated tRNA move to the P and E sites, respectively. Catalyzes the coordinated movement of the two tRNA molecules, the mRNA and conformational changes in the ribosome.</text>
</comment>
<comment type="subcellular location">
    <subcellularLocation>
        <location evidence="1">Cytoplasm</location>
    </subcellularLocation>
</comment>
<comment type="similarity">
    <text evidence="1">Belongs to the TRAFAC class translation factor GTPase superfamily. Classic translation factor GTPase family. EF-G/EF-2 subfamily.</text>
</comment>
<accession>Q0ID58</accession>
<reference key="1">
    <citation type="journal article" date="2006" name="Proc. Natl. Acad. Sci. U.S.A.">
        <title>Genome sequence of Synechococcus CC9311: insights into adaptation to a coastal environment.</title>
        <authorList>
            <person name="Palenik B."/>
            <person name="Ren Q."/>
            <person name="Dupont C.L."/>
            <person name="Myers G.S."/>
            <person name="Heidelberg J.F."/>
            <person name="Badger J.H."/>
            <person name="Madupu R."/>
            <person name="Nelson W.C."/>
            <person name="Brinkac L.M."/>
            <person name="Dodson R.J."/>
            <person name="Durkin A.S."/>
            <person name="Daugherty S.C."/>
            <person name="Sullivan S.A."/>
            <person name="Khouri H."/>
            <person name="Mohamoud Y."/>
            <person name="Halpin R."/>
            <person name="Paulsen I.T."/>
        </authorList>
    </citation>
    <scope>NUCLEOTIDE SEQUENCE [LARGE SCALE GENOMIC DNA]</scope>
    <source>
        <strain>CC9311</strain>
    </source>
</reference>